<evidence type="ECO:0000255" key="1">
    <source>
        <dbReference type="PROSITE-ProRule" id="PRU00515"/>
    </source>
</evidence>
<evidence type="ECO:0000303" key="2">
    <source>
    </source>
</evidence>
<evidence type="ECO:0000305" key="3"/>
<evidence type="ECO:0000305" key="4">
    <source>
    </source>
</evidence>
<evidence type="ECO:0000312" key="5">
    <source>
        <dbReference type="EMBL" id="CCA54205.1"/>
    </source>
</evidence>
<keyword id="KW-0045">Antibiotic biosynthesis</keyword>
<keyword id="KW-0413">Isomerase</keyword>
<keyword id="KW-1185">Reference proteome</keyword>
<gene>
    <name evidence="2" type="primary">cmlD</name>
    <name evidence="5" type="ordered locus">SVEN_0918</name>
</gene>
<comment type="function">
    <text evidence="4">Involved in chloramphenicol biosynthesis. Probably catalyzes the conversion of 4-amino-4-deoxychorismate to 4-amino-4-deoxyprephenate.</text>
</comment>
<comment type="catalytic activity">
    <reaction evidence="4">
        <text>4-amino-4-deoxychorismate = 4-amino-4-deoxyprephenate</text>
        <dbReference type="Rhea" id="RHEA:59376"/>
        <dbReference type="ChEBI" id="CHEBI:58406"/>
        <dbReference type="ChEBI" id="CHEBI:143070"/>
        <dbReference type="EC" id="5.4.99.67"/>
    </reaction>
    <physiologicalReaction direction="left-to-right" evidence="4">
        <dbReference type="Rhea" id="RHEA:59377"/>
    </physiologicalReaction>
</comment>
<comment type="pathway">
    <text evidence="4">Antibiotic biosynthesis.</text>
</comment>
<proteinExistence type="predicted"/>
<organism>
    <name type="scientific">Streptomyces venezuelae (strain ATCC 10712 / CBS 650.69 / DSM 40230 / JCM 4526 / NBRC 13096 / PD 04745)</name>
    <dbReference type="NCBI Taxonomy" id="953739"/>
    <lineage>
        <taxon>Bacteria</taxon>
        <taxon>Bacillati</taxon>
        <taxon>Actinomycetota</taxon>
        <taxon>Actinomycetes</taxon>
        <taxon>Kitasatosporales</taxon>
        <taxon>Streptomycetaceae</taxon>
        <taxon>Streptomyces</taxon>
    </lineage>
</organism>
<sequence length="103" mass="11889">MTEQNELQRLRAELDALDGTLLDTVRRRIDLGVRIARYKSRHGVPMMQPGRVSLVKDRAARYAADHGLDESFLVNLYDVIITEMCRVEDLVMSRESLTAEDRR</sequence>
<reference key="1">
    <citation type="journal article" date="2011" name="BMC Genomics">
        <title>Genome-wide analysis of the role of GlnR in Streptomyces venezuelae provides new insights into global nitrogen regulation in actinomycetes.</title>
        <authorList>
            <person name="Pullan S.T."/>
            <person name="Chandra G."/>
            <person name="Bibb M.J."/>
            <person name="Merrick M."/>
        </authorList>
    </citation>
    <scope>NUCLEOTIDE SEQUENCE [LARGE SCALE GENOMIC DNA]</scope>
    <source>
        <strain>ATCC 10712 / CBS 650.69 / DSM 40230 / JCM 4526 / NBRC 13096 / PD 04745</strain>
    </source>
</reference>
<reference key="2">
    <citation type="journal article" date="2001" name="Microbiology">
        <title>The gene cluster for chloramphenicol biosynthesis in Streptomyces venezuelae ISP5230 includes novel shikimate pathway homologues and a monomodular non-ribosomal peptide synthetase gene.</title>
        <authorList>
            <person name="He J."/>
            <person name="Magarvey N."/>
            <person name="Piraee M."/>
            <person name="Vining L.C."/>
        </authorList>
    </citation>
    <scope>FUNCTION</scope>
    <scope>PATHWAY</scope>
    <source>
        <strain>ATCC 10712 / CBS 650.69 / DSM 40230 / JCM 4526 / NBRC 13096 / PD 04745</strain>
    </source>
</reference>
<protein>
    <recommendedName>
        <fullName evidence="3">4-amino-4-deoxychorismate mutase</fullName>
        <shortName evidence="2">ADC mutase</shortName>
        <ecNumber evidence="4">5.4.99.67</ecNumber>
    </recommendedName>
</protein>
<name>CMLD_STRVP</name>
<dbReference type="EC" id="5.4.99.67" evidence="4"/>
<dbReference type="EMBL" id="FR845719">
    <property type="protein sequence ID" value="CCA54205.1"/>
    <property type="molecule type" value="Genomic_DNA"/>
</dbReference>
<dbReference type="RefSeq" id="WP_015032124.1">
    <property type="nucleotide sequence ID" value="NZ_JABVZO010000397.1"/>
</dbReference>
<dbReference type="SMR" id="F2RB77"/>
<dbReference type="STRING" id="953739.SVEN_0918"/>
<dbReference type="GeneID" id="51861506"/>
<dbReference type="KEGG" id="sve:SVEN_0918"/>
<dbReference type="PATRIC" id="fig|953739.5.peg.2964"/>
<dbReference type="eggNOG" id="COG1605">
    <property type="taxonomic scope" value="Bacteria"/>
</dbReference>
<dbReference type="HOGENOM" id="CLU_131518_1_1_11"/>
<dbReference type="OrthoDB" id="4479197at2"/>
<dbReference type="BioCyc" id="MetaCyc:MONOMER-20701"/>
<dbReference type="Proteomes" id="UP000006854">
    <property type="component" value="Chromosome"/>
</dbReference>
<dbReference type="GO" id="GO:0016835">
    <property type="term" value="F:carbon-oxygen lyase activity"/>
    <property type="evidence" value="ECO:0007669"/>
    <property type="project" value="InterPro"/>
</dbReference>
<dbReference type="GO" id="GO:0004106">
    <property type="term" value="F:chorismate mutase activity"/>
    <property type="evidence" value="ECO:0007669"/>
    <property type="project" value="InterPro"/>
</dbReference>
<dbReference type="GO" id="GO:0017000">
    <property type="term" value="P:antibiotic biosynthetic process"/>
    <property type="evidence" value="ECO:0007669"/>
    <property type="project" value="UniProtKB-KW"/>
</dbReference>
<dbReference type="GO" id="GO:0046417">
    <property type="term" value="P:chorismate metabolic process"/>
    <property type="evidence" value="ECO:0007669"/>
    <property type="project" value="InterPro"/>
</dbReference>
<dbReference type="GO" id="GO:0009697">
    <property type="term" value="P:salicylic acid biosynthetic process"/>
    <property type="evidence" value="ECO:0007669"/>
    <property type="project" value="InterPro"/>
</dbReference>
<dbReference type="Gene3D" id="1.20.59.10">
    <property type="entry name" value="Chorismate mutase"/>
    <property type="match status" value="1"/>
</dbReference>
<dbReference type="InterPro" id="IPR036263">
    <property type="entry name" value="Chorismate_II_sf"/>
</dbReference>
<dbReference type="InterPro" id="IPR051331">
    <property type="entry name" value="Chorismate_mutase-related"/>
</dbReference>
<dbReference type="InterPro" id="IPR036979">
    <property type="entry name" value="CM_dom_sf"/>
</dbReference>
<dbReference type="InterPro" id="IPR002701">
    <property type="entry name" value="CM_II_prokaryot"/>
</dbReference>
<dbReference type="InterPro" id="IPR008241">
    <property type="entry name" value="Isochorismate_pyruvate-lyase"/>
</dbReference>
<dbReference type="NCBIfam" id="TIGR01803">
    <property type="entry name" value="CM-like"/>
    <property type="match status" value="1"/>
</dbReference>
<dbReference type="PANTHER" id="PTHR38041">
    <property type="entry name" value="CHORISMATE MUTASE"/>
    <property type="match status" value="1"/>
</dbReference>
<dbReference type="PANTHER" id="PTHR38041:SF1">
    <property type="entry name" value="CHORISMATE MUTASE"/>
    <property type="match status" value="1"/>
</dbReference>
<dbReference type="Pfam" id="PF01817">
    <property type="entry name" value="CM_2"/>
    <property type="match status" value="1"/>
</dbReference>
<dbReference type="SMART" id="SM00830">
    <property type="entry name" value="CM_2"/>
    <property type="match status" value="1"/>
</dbReference>
<dbReference type="SUPFAM" id="SSF48600">
    <property type="entry name" value="Chorismate mutase II"/>
    <property type="match status" value="1"/>
</dbReference>
<dbReference type="PROSITE" id="PS51168">
    <property type="entry name" value="CHORISMATE_MUT_2"/>
    <property type="match status" value="1"/>
</dbReference>
<accession>F2RB77</accession>
<feature type="chain" id="PRO_0000447222" description="4-amino-4-deoxychorismate mutase">
    <location>
        <begin position="1"/>
        <end position="103"/>
    </location>
</feature>
<feature type="domain" description="Chorismate mutase" evidence="1">
    <location>
        <begin position="1"/>
        <end position="92"/>
    </location>
</feature>